<keyword id="KW-0997">Cell inner membrane</keyword>
<keyword id="KW-1003">Cell membrane</keyword>
<keyword id="KW-0472">Membrane</keyword>
<keyword id="KW-1185">Reference proteome</keyword>
<keyword id="KW-0812">Transmembrane</keyword>
<keyword id="KW-1133">Transmembrane helix</keyword>
<keyword id="KW-0813">Transport</keyword>
<accession>Q3Z1V3</accession>
<sequence length="121" mass="13115">MYIYWILLGLAIATEITGTLSMKWASVSEGNGGFILMLVMISLSYIFLSFAVKKIALGVAYALWEGIGILFITLFSVLLFDESLSLMKIAGLTTLVAGIVLIKSGTRKARKPELEVNHGAV</sequence>
<name>MDTJ_SHISS</name>
<gene>
    <name evidence="1" type="primary">mdtJ</name>
    <name type="ordered locus">SSON_1560</name>
</gene>
<feature type="chain" id="PRO_0000331183" description="Spermidine export protein MdtJ">
    <location>
        <begin position="1"/>
        <end position="121"/>
    </location>
</feature>
<feature type="transmembrane region" description="Helical" evidence="1">
    <location>
        <begin position="1"/>
        <end position="21"/>
    </location>
</feature>
<feature type="transmembrane region" description="Helical" evidence="1">
    <location>
        <begin position="32"/>
        <end position="52"/>
    </location>
</feature>
<feature type="transmembrane region" description="Helical" evidence="1">
    <location>
        <begin position="55"/>
        <end position="75"/>
    </location>
</feature>
<feature type="transmembrane region" description="Helical" evidence="1">
    <location>
        <begin position="82"/>
        <end position="102"/>
    </location>
</feature>
<evidence type="ECO:0000255" key="1">
    <source>
        <dbReference type="HAMAP-Rule" id="MF_01598"/>
    </source>
</evidence>
<organism>
    <name type="scientific">Shigella sonnei (strain Ss046)</name>
    <dbReference type="NCBI Taxonomy" id="300269"/>
    <lineage>
        <taxon>Bacteria</taxon>
        <taxon>Pseudomonadati</taxon>
        <taxon>Pseudomonadota</taxon>
        <taxon>Gammaproteobacteria</taxon>
        <taxon>Enterobacterales</taxon>
        <taxon>Enterobacteriaceae</taxon>
        <taxon>Shigella</taxon>
    </lineage>
</organism>
<reference key="1">
    <citation type="journal article" date="2005" name="Nucleic Acids Res.">
        <title>Genome dynamics and diversity of Shigella species, the etiologic agents of bacillary dysentery.</title>
        <authorList>
            <person name="Yang F."/>
            <person name="Yang J."/>
            <person name="Zhang X."/>
            <person name="Chen L."/>
            <person name="Jiang Y."/>
            <person name="Yan Y."/>
            <person name="Tang X."/>
            <person name="Wang J."/>
            <person name="Xiong Z."/>
            <person name="Dong J."/>
            <person name="Xue Y."/>
            <person name="Zhu Y."/>
            <person name="Xu X."/>
            <person name="Sun L."/>
            <person name="Chen S."/>
            <person name="Nie H."/>
            <person name="Peng J."/>
            <person name="Xu J."/>
            <person name="Wang Y."/>
            <person name="Yuan Z."/>
            <person name="Wen Y."/>
            <person name="Yao Z."/>
            <person name="Shen Y."/>
            <person name="Qiang B."/>
            <person name="Hou Y."/>
            <person name="Yu J."/>
            <person name="Jin Q."/>
        </authorList>
    </citation>
    <scope>NUCLEOTIDE SEQUENCE [LARGE SCALE GENOMIC DNA]</scope>
    <source>
        <strain>Ss046</strain>
    </source>
</reference>
<dbReference type="EMBL" id="CP000038">
    <property type="protein sequence ID" value="AAZ88259.1"/>
    <property type="molecule type" value="Genomic_DNA"/>
</dbReference>
<dbReference type="RefSeq" id="WP_000276149.1">
    <property type="nucleotide sequence ID" value="NC_007384.1"/>
</dbReference>
<dbReference type="SMR" id="Q3Z1V3"/>
<dbReference type="GeneID" id="93775748"/>
<dbReference type="KEGG" id="ssn:SSON_1560"/>
<dbReference type="HOGENOM" id="CLU_133067_0_0_6"/>
<dbReference type="Proteomes" id="UP000002529">
    <property type="component" value="Chromosome"/>
</dbReference>
<dbReference type="GO" id="GO:0005886">
    <property type="term" value="C:plasma membrane"/>
    <property type="evidence" value="ECO:0007669"/>
    <property type="project" value="UniProtKB-SubCell"/>
</dbReference>
<dbReference type="GO" id="GO:0015199">
    <property type="term" value="F:amino-acid betaine transmembrane transporter activity"/>
    <property type="evidence" value="ECO:0007669"/>
    <property type="project" value="TreeGrafter"/>
</dbReference>
<dbReference type="GO" id="GO:0015297">
    <property type="term" value="F:antiporter activity"/>
    <property type="evidence" value="ECO:0007669"/>
    <property type="project" value="TreeGrafter"/>
</dbReference>
<dbReference type="GO" id="GO:0015220">
    <property type="term" value="F:choline transmembrane transporter activity"/>
    <property type="evidence" value="ECO:0007669"/>
    <property type="project" value="TreeGrafter"/>
</dbReference>
<dbReference type="GO" id="GO:0015606">
    <property type="term" value="F:spermidine transmembrane transporter activity"/>
    <property type="evidence" value="ECO:0007669"/>
    <property type="project" value="UniProtKB-UniRule"/>
</dbReference>
<dbReference type="GO" id="GO:0031460">
    <property type="term" value="P:glycine betaine transport"/>
    <property type="evidence" value="ECO:0007669"/>
    <property type="project" value="TreeGrafter"/>
</dbReference>
<dbReference type="FunFam" id="1.10.3730.20:FF:000001">
    <property type="entry name" value="Quaternary ammonium compound resistance transporter SugE"/>
    <property type="match status" value="1"/>
</dbReference>
<dbReference type="Gene3D" id="1.10.3730.20">
    <property type="match status" value="1"/>
</dbReference>
<dbReference type="HAMAP" id="MF_01598">
    <property type="entry name" value="MdtJ"/>
    <property type="match status" value="1"/>
</dbReference>
<dbReference type="InterPro" id="IPR000390">
    <property type="entry name" value="Small_drug/metabolite_transptr"/>
</dbReference>
<dbReference type="InterPro" id="IPR045324">
    <property type="entry name" value="Small_multidrug_res"/>
</dbReference>
<dbReference type="InterPro" id="IPR023740">
    <property type="entry name" value="Spermidine_export_MdtJ"/>
</dbReference>
<dbReference type="NCBIfam" id="NF007767">
    <property type="entry name" value="PRK10452.1"/>
    <property type="match status" value="1"/>
</dbReference>
<dbReference type="PANTHER" id="PTHR30561">
    <property type="entry name" value="SMR FAMILY PROTON-DEPENDENT DRUG EFFLUX TRANSPORTER SUGE"/>
    <property type="match status" value="1"/>
</dbReference>
<dbReference type="PANTHER" id="PTHR30561:SF2">
    <property type="entry name" value="SPERMIDINE EXPORT PROTEIN MDTJ"/>
    <property type="match status" value="1"/>
</dbReference>
<dbReference type="Pfam" id="PF00893">
    <property type="entry name" value="Multi_Drug_Res"/>
    <property type="match status" value="1"/>
</dbReference>
<dbReference type="SUPFAM" id="SSF103481">
    <property type="entry name" value="Multidrug resistance efflux transporter EmrE"/>
    <property type="match status" value="1"/>
</dbReference>
<proteinExistence type="inferred from homology"/>
<protein>
    <recommendedName>
        <fullName evidence="1">Spermidine export protein MdtJ</fullName>
    </recommendedName>
</protein>
<comment type="function">
    <text evidence="1">Catalyzes the excretion of spermidine.</text>
</comment>
<comment type="subunit">
    <text evidence="1">Forms a complex with MdtI.</text>
</comment>
<comment type="subcellular location">
    <subcellularLocation>
        <location evidence="1">Cell inner membrane</location>
        <topology evidence="1">Multi-pass membrane protein</topology>
    </subcellularLocation>
</comment>
<comment type="similarity">
    <text evidence="1">Belongs to the drug/metabolite transporter (DMT) superfamily. Small multidrug resistance (SMR) (TC 2.A.7.1) family. MdtJ subfamily.</text>
</comment>